<keyword id="KW-0687">Ribonucleoprotein</keyword>
<keyword id="KW-0689">Ribosomal protein</keyword>
<keyword id="KW-0694">RNA-binding</keyword>
<keyword id="KW-0699">rRNA-binding</keyword>
<protein>
    <recommendedName>
        <fullName evidence="1">Large ribosomal subunit protein uL6</fullName>
    </recommendedName>
    <alternativeName>
        <fullName evidence="2">50S ribosomal protein L6</fullName>
    </alternativeName>
</protein>
<sequence length="177" mass="19060">MSRVGKKPVPVPSGVTATVTGQTVKVKGSKGELQFVVPSQVVVEFKDGAVSVQPKDQSKQARSLWGTSRAQVANLVEGVSKGFEKKLEITGVGYRAAMAGKALKLSLGYSHDIEYEIPAGITIVTPKPTEIVVSGIDRQRVGQVAAEIREYRGPEPYKGKGVKYAGEFIFRKEGKKK</sequence>
<reference key="1">
    <citation type="submission" date="2008-12" db="EMBL/GenBank/DDBJ databases">
        <title>Complete sequence of chromosome of Methylobacterium chloromethanicum CM4.</title>
        <authorList>
            <consortium name="US DOE Joint Genome Institute"/>
            <person name="Lucas S."/>
            <person name="Copeland A."/>
            <person name="Lapidus A."/>
            <person name="Glavina del Rio T."/>
            <person name="Dalin E."/>
            <person name="Tice H."/>
            <person name="Bruce D."/>
            <person name="Goodwin L."/>
            <person name="Pitluck S."/>
            <person name="Chertkov O."/>
            <person name="Brettin T."/>
            <person name="Detter J.C."/>
            <person name="Han C."/>
            <person name="Larimer F."/>
            <person name="Land M."/>
            <person name="Hauser L."/>
            <person name="Kyrpides N."/>
            <person name="Mikhailova N."/>
            <person name="Marx C."/>
            <person name="Richardson P."/>
        </authorList>
    </citation>
    <scope>NUCLEOTIDE SEQUENCE [LARGE SCALE GENOMIC DNA]</scope>
    <source>
        <strain>CM4 / NCIMB 13688</strain>
    </source>
</reference>
<proteinExistence type="inferred from homology"/>
<organism>
    <name type="scientific">Methylorubrum extorquens (strain CM4 / NCIMB 13688)</name>
    <name type="common">Methylobacterium extorquens</name>
    <dbReference type="NCBI Taxonomy" id="440085"/>
    <lineage>
        <taxon>Bacteria</taxon>
        <taxon>Pseudomonadati</taxon>
        <taxon>Pseudomonadota</taxon>
        <taxon>Alphaproteobacteria</taxon>
        <taxon>Hyphomicrobiales</taxon>
        <taxon>Methylobacteriaceae</taxon>
        <taxon>Methylorubrum</taxon>
    </lineage>
</organism>
<dbReference type="EMBL" id="CP001298">
    <property type="protein sequence ID" value="ACK83306.1"/>
    <property type="molecule type" value="Genomic_DNA"/>
</dbReference>
<dbReference type="RefSeq" id="WP_012253653.1">
    <property type="nucleotide sequence ID" value="NC_011757.1"/>
</dbReference>
<dbReference type="SMR" id="B7L0T5"/>
<dbReference type="KEGG" id="mch:Mchl_2464"/>
<dbReference type="HOGENOM" id="CLU_065464_1_2_5"/>
<dbReference type="Proteomes" id="UP000002385">
    <property type="component" value="Chromosome"/>
</dbReference>
<dbReference type="GO" id="GO:0022625">
    <property type="term" value="C:cytosolic large ribosomal subunit"/>
    <property type="evidence" value="ECO:0007669"/>
    <property type="project" value="TreeGrafter"/>
</dbReference>
<dbReference type="GO" id="GO:0019843">
    <property type="term" value="F:rRNA binding"/>
    <property type="evidence" value="ECO:0007669"/>
    <property type="project" value="UniProtKB-UniRule"/>
</dbReference>
<dbReference type="GO" id="GO:0003735">
    <property type="term" value="F:structural constituent of ribosome"/>
    <property type="evidence" value="ECO:0007669"/>
    <property type="project" value="InterPro"/>
</dbReference>
<dbReference type="GO" id="GO:0002181">
    <property type="term" value="P:cytoplasmic translation"/>
    <property type="evidence" value="ECO:0007669"/>
    <property type="project" value="TreeGrafter"/>
</dbReference>
<dbReference type="FunFam" id="3.90.930.12:FF:000001">
    <property type="entry name" value="50S ribosomal protein L6"/>
    <property type="match status" value="1"/>
</dbReference>
<dbReference type="FunFam" id="3.90.930.12:FF:000002">
    <property type="entry name" value="50S ribosomal protein L6"/>
    <property type="match status" value="1"/>
</dbReference>
<dbReference type="Gene3D" id="3.90.930.12">
    <property type="entry name" value="Ribosomal protein L6, alpha-beta domain"/>
    <property type="match status" value="2"/>
</dbReference>
<dbReference type="HAMAP" id="MF_01365_B">
    <property type="entry name" value="Ribosomal_uL6_B"/>
    <property type="match status" value="1"/>
</dbReference>
<dbReference type="InterPro" id="IPR000702">
    <property type="entry name" value="Ribosomal_uL6-like"/>
</dbReference>
<dbReference type="InterPro" id="IPR036789">
    <property type="entry name" value="Ribosomal_uL6-like_a/b-dom_sf"/>
</dbReference>
<dbReference type="InterPro" id="IPR020040">
    <property type="entry name" value="Ribosomal_uL6_a/b-dom"/>
</dbReference>
<dbReference type="InterPro" id="IPR019906">
    <property type="entry name" value="Ribosomal_uL6_bac-type"/>
</dbReference>
<dbReference type="InterPro" id="IPR002358">
    <property type="entry name" value="Ribosomal_uL6_CS"/>
</dbReference>
<dbReference type="NCBIfam" id="TIGR03654">
    <property type="entry name" value="L6_bact"/>
    <property type="match status" value="1"/>
</dbReference>
<dbReference type="PANTHER" id="PTHR11655">
    <property type="entry name" value="60S/50S RIBOSOMAL PROTEIN L6/L9"/>
    <property type="match status" value="1"/>
</dbReference>
<dbReference type="PANTHER" id="PTHR11655:SF14">
    <property type="entry name" value="LARGE RIBOSOMAL SUBUNIT PROTEIN UL6M"/>
    <property type="match status" value="1"/>
</dbReference>
<dbReference type="Pfam" id="PF00347">
    <property type="entry name" value="Ribosomal_L6"/>
    <property type="match status" value="2"/>
</dbReference>
<dbReference type="PIRSF" id="PIRSF002162">
    <property type="entry name" value="Ribosomal_L6"/>
    <property type="match status" value="1"/>
</dbReference>
<dbReference type="PRINTS" id="PR00059">
    <property type="entry name" value="RIBOSOMALL6"/>
</dbReference>
<dbReference type="SUPFAM" id="SSF56053">
    <property type="entry name" value="Ribosomal protein L6"/>
    <property type="match status" value="2"/>
</dbReference>
<dbReference type="PROSITE" id="PS00525">
    <property type="entry name" value="RIBOSOMAL_L6_1"/>
    <property type="match status" value="1"/>
</dbReference>
<comment type="function">
    <text evidence="1">This protein binds to the 23S rRNA, and is important in its secondary structure. It is located near the subunit interface in the base of the L7/L12 stalk, and near the tRNA binding site of the peptidyltransferase center.</text>
</comment>
<comment type="subunit">
    <text evidence="1">Part of the 50S ribosomal subunit.</text>
</comment>
<comment type="similarity">
    <text evidence="1">Belongs to the universal ribosomal protein uL6 family.</text>
</comment>
<gene>
    <name evidence="1" type="primary">rplF</name>
    <name type="ordered locus">Mchl_2464</name>
</gene>
<name>RL6_METC4</name>
<evidence type="ECO:0000255" key="1">
    <source>
        <dbReference type="HAMAP-Rule" id="MF_01365"/>
    </source>
</evidence>
<evidence type="ECO:0000305" key="2"/>
<feature type="chain" id="PRO_1000166817" description="Large ribosomal subunit protein uL6">
    <location>
        <begin position="1"/>
        <end position="177"/>
    </location>
</feature>
<accession>B7L0T5</accession>